<sequence>MSSSNIQRPKILSTLPSIFSYLHDAKVRSKMTFADIAAEMDRDEWYVAAIFYGQAKPDQADIVKLSAALNLQQRYLDEAFGPDFFPHRGLGEFPPQDPVLYRLYEVLVVYGYPLKHMIHEKFGDGIMSAIDFEGHVEKVKGSSNEDRVKITLNGKFLPYRRW</sequence>
<reference key="1">
    <citation type="journal article" date="2006" name="Nature">
        <title>Insights from the genome of the biotrophic fungal plant pathogen Ustilago maydis.</title>
        <authorList>
            <person name="Kaemper J."/>
            <person name="Kahmann R."/>
            <person name="Boelker M."/>
            <person name="Ma L.-J."/>
            <person name="Brefort T."/>
            <person name="Saville B.J."/>
            <person name="Banuett F."/>
            <person name="Kronstad J.W."/>
            <person name="Gold S.E."/>
            <person name="Mueller O."/>
            <person name="Perlin M.H."/>
            <person name="Woesten H.A.B."/>
            <person name="de Vries R."/>
            <person name="Ruiz-Herrera J."/>
            <person name="Reynaga-Pena C.G."/>
            <person name="Snetselaar K."/>
            <person name="McCann M."/>
            <person name="Perez-Martin J."/>
            <person name="Feldbruegge M."/>
            <person name="Basse C.W."/>
            <person name="Steinberg G."/>
            <person name="Ibeas J.I."/>
            <person name="Holloman W."/>
            <person name="Guzman P."/>
            <person name="Farman M.L."/>
            <person name="Stajich J.E."/>
            <person name="Sentandreu R."/>
            <person name="Gonzalez-Prieto J.M."/>
            <person name="Kennell J.C."/>
            <person name="Molina L."/>
            <person name="Schirawski J."/>
            <person name="Mendoza-Mendoza A."/>
            <person name="Greilinger D."/>
            <person name="Muench K."/>
            <person name="Roessel N."/>
            <person name="Scherer M."/>
            <person name="Vranes M."/>
            <person name="Ladendorf O."/>
            <person name="Vincon V."/>
            <person name="Fuchs U."/>
            <person name="Sandrock B."/>
            <person name="Meng S."/>
            <person name="Ho E.C.H."/>
            <person name="Cahill M.J."/>
            <person name="Boyce K.J."/>
            <person name="Klose J."/>
            <person name="Klosterman S.J."/>
            <person name="Deelstra H.J."/>
            <person name="Ortiz-Castellanos L."/>
            <person name="Li W."/>
            <person name="Sanchez-Alonso P."/>
            <person name="Schreier P.H."/>
            <person name="Haeuser-Hahn I."/>
            <person name="Vaupel M."/>
            <person name="Koopmann E."/>
            <person name="Friedrich G."/>
            <person name="Voss H."/>
            <person name="Schlueter T."/>
            <person name="Margolis J."/>
            <person name="Platt D."/>
            <person name="Swimmer C."/>
            <person name="Gnirke A."/>
            <person name="Chen F."/>
            <person name="Vysotskaia V."/>
            <person name="Mannhaupt G."/>
            <person name="Gueldener U."/>
            <person name="Muensterkoetter M."/>
            <person name="Haase D."/>
            <person name="Oesterheld M."/>
            <person name="Mewes H.-W."/>
            <person name="Mauceli E.W."/>
            <person name="DeCaprio D."/>
            <person name="Wade C.M."/>
            <person name="Butler J."/>
            <person name="Young S.K."/>
            <person name="Jaffe D.B."/>
            <person name="Calvo S.E."/>
            <person name="Nusbaum C."/>
            <person name="Galagan J.E."/>
            <person name="Birren B.W."/>
        </authorList>
    </citation>
    <scope>NUCLEOTIDE SEQUENCE [LARGE SCALE GENOMIC DNA]</scope>
    <source>
        <strain>DSM 14603 / FGSC 9021 / UM521</strain>
    </source>
</reference>
<reference key="2">
    <citation type="submission" date="2014-09" db="EMBL/GenBank/DDBJ databases">
        <authorList>
            <person name="Gueldener U."/>
            <person name="Muensterkoetter M."/>
            <person name="Walter M.C."/>
            <person name="Mannhaupt G."/>
            <person name="Kahmann R."/>
        </authorList>
    </citation>
    <scope>GENOME REANNOTATION</scope>
    <source>
        <strain>DSM 14603 / FGSC 9021 / UM521</strain>
    </source>
</reference>
<name>CYNS_MYCMD</name>
<comment type="function">
    <text evidence="1">Catalyzes the reaction of cyanate with bicarbonate to produce ammonia and carbon dioxide.</text>
</comment>
<comment type="catalytic activity">
    <reaction evidence="1">
        <text>cyanate + hydrogencarbonate + 3 H(+) = NH4(+) + 2 CO2</text>
        <dbReference type="Rhea" id="RHEA:11120"/>
        <dbReference type="ChEBI" id="CHEBI:15378"/>
        <dbReference type="ChEBI" id="CHEBI:16526"/>
        <dbReference type="ChEBI" id="CHEBI:17544"/>
        <dbReference type="ChEBI" id="CHEBI:28938"/>
        <dbReference type="ChEBI" id="CHEBI:29195"/>
        <dbReference type="EC" id="4.2.1.104"/>
    </reaction>
</comment>
<comment type="similarity">
    <text evidence="1">Belongs to the cyanase family.</text>
</comment>
<feature type="chain" id="PRO_0000403270" description="Cyanate hydratase">
    <location>
        <begin position="1"/>
        <end position="162"/>
    </location>
</feature>
<feature type="active site" evidence="1">
    <location>
        <position position="102"/>
    </location>
</feature>
<feature type="active site" evidence="1">
    <location>
        <position position="105"/>
    </location>
</feature>
<feature type="active site" evidence="1">
    <location>
        <position position="128"/>
    </location>
</feature>
<keyword id="KW-0456">Lyase</keyword>
<keyword id="KW-1185">Reference proteome</keyword>
<proteinExistence type="inferred from homology"/>
<gene>
    <name evidence="1" type="primary">CYN1</name>
    <name type="ORF">UMAG_11378</name>
</gene>
<accession>Q4PD40</accession>
<accession>A0A0D1E8V1</accession>
<organism>
    <name type="scientific">Mycosarcoma maydis</name>
    <name type="common">Corn smut fungus</name>
    <name type="synonym">Ustilago maydis</name>
    <dbReference type="NCBI Taxonomy" id="5270"/>
    <lineage>
        <taxon>Eukaryota</taxon>
        <taxon>Fungi</taxon>
        <taxon>Dikarya</taxon>
        <taxon>Basidiomycota</taxon>
        <taxon>Ustilaginomycotina</taxon>
        <taxon>Ustilaginomycetes</taxon>
        <taxon>Ustilaginales</taxon>
        <taxon>Ustilaginaceae</taxon>
        <taxon>Mycosarcoma</taxon>
    </lineage>
</organism>
<evidence type="ECO:0000255" key="1">
    <source>
        <dbReference type="HAMAP-Rule" id="MF_03139"/>
    </source>
</evidence>
<protein>
    <recommendedName>
        <fullName evidence="1">Cyanate hydratase</fullName>
        <shortName evidence="1">Cyanase</shortName>
        <ecNumber evidence="1">4.2.1.104</ecNumber>
    </recommendedName>
    <alternativeName>
        <fullName evidence="1">Cyanate hydrolase</fullName>
    </alternativeName>
    <alternativeName>
        <fullName evidence="1">Cyanate lyase</fullName>
    </alternativeName>
</protein>
<dbReference type="EC" id="4.2.1.104" evidence="1"/>
<dbReference type="EMBL" id="CM003142">
    <property type="protein sequence ID" value="KIS70825.1"/>
    <property type="molecule type" value="Genomic_DNA"/>
</dbReference>
<dbReference type="RefSeq" id="XP_011388037.1">
    <property type="nucleotide sequence ID" value="XM_011389735.1"/>
</dbReference>
<dbReference type="SMR" id="Q4PD40"/>
<dbReference type="STRING" id="237631.Q4PD40"/>
<dbReference type="EnsemblFungi" id="KIS70825">
    <property type="protein sequence ID" value="KIS70825"/>
    <property type="gene ID" value="UMAG_11378"/>
</dbReference>
<dbReference type="GeneID" id="23567270"/>
<dbReference type="KEGG" id="uma:UMAG_11378"/>
<dbReference type="VEuPathDB" id="FungiDB:UMAG_11378"/>
<dbReference type="eggNOG" id="ENOG502S3YJ">
    <property type="taxonomic scope" value="Eukaryota"/>
</dbReference>
<dbReference type="InParanoid" id="Q4PD40"/>
<dbReference type="OrthoDB" id="10019422at2759"/>
<dbReference type="BioCyc" id="MetaCyc:MONOMER-17193"/>
<dbReference type="Proteomes" id="UP000000561">
    <property type="component" value="Chromosome 3"/>
</dbReference>
<dbReference type="GO" id="GO:0008824">
    <property type="term" value="F:cyanate hydratase activity"/>
    <property type="evidence" value="ECO:0007669"/>
    <property type="project" value="UniProtKB-UniRule"/>
</dbReference>
<dbReference type="GO" id="GO:0003677">
    <property type="term" value="F:DNA binding"/>
    <property type="evidence" value="ECO:0007669"/>
    <property type="project" value="InterPro"/>
</dbReference>
<dbReference type="GO" id="GO:0009439">
    <property type="term" value="P:cyanate metabolic process"/>
    <property type="evidence" value="ECO:0007669"/>
    <property type="project" value="UniProtKB-UniRule"/>
</dbReference>
<dbReference type="CDD" id="cd00559">
    <property type="entry name" value="Cyanase_C"/>
    <property type="match status" value="1"/>
</dbReference>
<dbReference type="Gene3D" id="3.30.1160.10">
    <property type="entry name" value="Cyanate lyase, C-terminal domain"/>
    <property type="match status" value="1"/>
</dbReference>
<dbReference type="Gene3D" id="1.10.260.40">
    <property type="entry name" value="lambda repressor-like DNA-binding domains"/>
    <property type="match status" value="1"/>
</dbReference>
<dbReference type="HAMAP" id="MF_00535">
    <property type="entry name" value="Cyanate_hydrat"/>
    <property type="match status" value="1"/>
</dbReference>
<dbReference type="InterPro" id="IPR008076">
    <property type="entry name" value="Cyanase"/>
</dbReference>
<dbReference type="InterPro" id="IPR003712">
    <property type="entry name" value="Cyanate_lyase_C"/>
</dbReference>
<dbReference type="InterPro" id="IPR036581">
    <property type="entry name" value="Cyanate_lyase_C_sf"/>
</dbReference>
<dbReference type="InterPro" id="IPR010982">
    <property type="entry name" value="Lambda_DNA-bd_dom_sf"/>
</dbReference>
<dbReference type="NCBIfam" id="TIGR00673">
    <property type="entry name" value="cynS"/>
    <property type="match status" value="1"/>
</dbReference>
<dbReference type="PANTHER" id="PTHR34186">
    <property type="entry name" value="CYANATE HYDRATASE"/>
    <property type="match status" value="1"/>
</dbReference>
<dbReference type="PANTHER" id="PTHR34186:SF2">
    <property type="entry name" value="CYANATE HYDRATASE"/>
    <property type="match status" value="1"/>
</dbReference>
<dbReference type="Pfam" id="PF02560">
    <property type="entry name" value="Cyanate_lyase"/>
    <property type="match status" value="1"/>
</dbReference>
<dbReference type="PIRSF" id="PIRSF001263">
    <property type="entry name" value="Cyanate_hydratas"/>
    <property type="match status" value="1"/>
</dbReference>
<dbReference type="PRINTS" id="PR01693">
    <property type="entry name" value="CYANASE"/>
</dbReference>
<dbReference type="SMART" id="SM01116">
    <property type="entry name" value="Cyanate_lyase"/>
    <property type="match status" value="1"/>
</dbReference>
<dbReference type="SUPFAM" id="SSF55234">
    <property type="entry name" value="Cyanase C-terminal domain"/>
    <property type="match status" value="1"/>
</dbReference>
<dbReference type="SUPFAM" id="SSF47413">
    <property type="entry name" value="lambda repressor-like DNA-binding domains"/>
    <property type="match status" value="1"/>
</dbReference>